<proteinExistence type="inferred from homology"/>
<gene>
    <name evidence="1" type="primary">prmA</name>
    <name type="ordered locus">EcE24377A_3743</name>
</gene>
<reference key="1">
    <citation type="journal article" date="2008" name="J. Bacteriol.">
        <title>The pangenome structure of Escherichia coli: comparative genomic analysis of E. coli commensal and pathogenic isolates.</title>
        <authorList>
            <person name="Rasko D.A."/>
            <person name="Rosovitz M.J."/>
            <person name="Myers G.S.A."/>
            <person name="Mongodin E.F."/>
            <person name="Fricke W.F."/>
            <person name="Gajer P."/>
            <person name="Crabtree J."/>
            <person name="Sebaihia M."/>
            <person name="Thomson N.R."/>
            <person name="Chaudhuri R."/>
            <person name="Henderson I.R."/>
            <person name="Sperandio V."/>
            <person name="Ravel J."/>
        </authorList>
    </citation>
    <scope>NUCLEOTIDE SEQUENCE [LARGE SCALE GENOMIC DNA]</scope>
    <source>
        <strain>E24377A / ETEC</strain>
    </source>
</reference>
<sequence>MPWIQLKLNTTGANAEDLSDALMEAGAVSITFQDTHDTPVFEPLPGETRLWGDTDVIGLFDAETDMNDVVAILENHPLLGAGFAHKIEQLEDKDWEREWMDNFHPMRFGERLWICPSWRDVPDENAVNVMLDPGLAFGTGTHPTTSLCLQWLDSLDLTGKTVIDFGCGSGILAIAALKLGAAKAIGIDIDPQAIQASRDNAERNGVSDRLELYLPKDQPEEMKADVVVANILAGPLRELAPLISVLPVSGGLLGLSGILASQAESVCEAYADSFALDPVVEKEEWCRITGRKN</sequence>
<feature type="chain" id="PRO_1000062119" description="Ribosomal protein L11 methyltransferase">
    <location>
        <begin position="1"/>
        <end position="293"/>
    </location>
</feature>
<feature type="binding site" evidence="1">
    <location>
        <position position="145"/>
    </location>
    <ligand>
        <name>S-adenosyl-L-methionine</name>
        <dbReference type="ChEBI" id="CHEBI:59789"/>
    </ligand>
</feature>
<feature type="binding site" evidence="1">
    <location>
        <position position="166"/>
    </location>
    <ligand>
        <name>S-adenosyl-L-methionine</name>
        <dbReference type="ChEBI" id="CHEBI:59789"/>
    </ligand>
</feature>
<feature type="binding site" evidence="1">
    <location>
        <position position="188"/>
    </location>
    <ligand>
        <name>S-adenosyl-L-methionine</name>
        <dbReference type="ChEBI" id="CHEBI:59789"/>
    </ligand>
</feature>
<feature type="binding site" evidence="1">
    <location>
        <position position="230"/>
    </location>
    <ligand>
        <name>S-adenosyl-L-methionine</name>
        <dbReference type="ChEBI" id="CHEBI:59789"/>
    </ligand>
</feature>
<organism>
    <name type="scientific">Escherichia coli O139:H28 (strain E24377A / ETEC)</name>
    <dbReference type="NCBI Taxonomy" id="331111"/>
    <lineage>
        <taxon>Bacteria</taxon>
        <taxon>Pseudomonadati</taxon>
        <taxon>Pseudomonadota</taxon>
        <taxon>Gammaproteobacteria</taxon>
        <taxon>Enterobacterales</taxon>
        <taxon>Enterobacteriaceae</taxon>
        <taxon>Escherichia</taxon>
    </lineage>
</organism>
<name>PRMA_ECO24</name>
<accession>A7ZSF3</accession>
<keyword id="KW-0963">Cytoplasm</keyword>
<keyword id="KW-0489">Methyltransferase</keyword>
<keyword id="KW-1185">Reference proteome</keyword>
<keyword id="KW-0949">S-adenosyl-L-methionine</keyword>
<keyword id="KW-0808">Transferase</keyword>
<dbReference type="EC" id="2.1.1.-" evidence="1"/>
<dbReference type="EMBL" id="CP000800">
    <property type="protein sequence ID" value="ABV17571.1"/>
    <property type="molecule type" value="Genomic_DNA"/>
</dbReference>
<dbReference type="RefSeq" id="WP_001145827.1">
    <property type="nucleotide sequence ID" value="NC_009801.1"/>
</dbReference>
<dbReference type="SMR" id="A7ZSF3"/>
<dbReference type="GeneID" id="75206107"/>
<dbReference type="KEGG" id="ecw:EcE24377A_3743"/>
<dbReference type="HOGENOM" id="CLU_049382_4_1_6"/>
<dbReference type="Proteomes" id="UP000001122">
    <property type="component" value="Chromosome"/>
</dbReference>
<dbReference type="GO" id="GO:0005829">
    <property type="term" value="C:cytosol"/>
    <property type="evidence" value="ECO:0007669"/>
    <property type="project" value="TreeGrafter"/>
</dbReference>
<dbReference type="GO" id="GO:0016279">
    <property type="term" value="F:protein-lysine N-methyltransferase activity"/>
    <property type="evidence" value="ECO:0007669"/>
    <property type="project" value="TreeGrafter"/>
</dbReference>
<dbReference type="GO" id="GO:0032259">
    <property type="term" value="P:methylation"/>
    <property type="evidence" value="ECO:0007669"/>
    <property type="project" value="UniProtKB-KW"/>
</dbReference>
<dbReference type="CDD" id="cd02440">
    <property type="entry name" value="AdoMet_MTases"/>
    <property type="match status" value="1"/>
</dbReference>
<dbReference type="FunFam" id="3.40.50.150:FF:000021">
    <property type="entry name" value="Ribosomal protein L11 methyltransferase"/>
    <property type="match status" value="1"/>
</dbReference>
<dbReference type="Gene3D" id="3.40.50.150">
    <property type="entry name" value="Vaccinia Virus protein VP39"/>
    <property type="match status" value="1"/>
</dbReference>
<dbReference type="HAMAP" id="MF_00735">
    <property type="entry name" value="Methyltr_PrmA"/>
    <property type="match status" value="1"/>
</dbReference>
<dbReference type="InterPro" id="IPR050078">
    <property type="entry name" value="Ribosomal_L11_MeTrfase_PrmA"/>
</dbReference>
<dbReference type="InterPro" id="IPR004498">
    <property type="entry name" value="Ribosomal_PrmA_MeTrfase"/>
</dbReference>
<dbReference type="InterPro" id="IPR029063">
    <property type="entry name" value="SAM-dependent_MTases_sf"/>
</dbReference>
<dbReference type="NCBIfam" id="TIGR00406">
    <property type="entry name" value="prmA"/>
    <property type="match status" value="1"/>
</dbReference>
<dbReference type="PANTHER" id="PTHR43648">
    <property type="entry name" value="ELECTRON TRANSFER FLAVOPROTEIN BETA SUBUNIT LYSINE METHYLTRANSFERASE"/>
    <property type="match status" value="1"/>
</dbReference>
<dbReference type="PANTHER" id="PTHR43648:SF1">
    <property type="entry name" value="ELECTRON TRANSFER FLAVOPROTEIN BETA SUBUNIT LYSINE METHYLTRANSFERASE"/>
    <property type="match status" value="1"/>
</dbReference>
<dbReference type="Pfam" id="PF06325">
    <property type="entry name" value="PrmA"/>
    <property type="match status" value="1"/>
</dbReference>
<dbReference type="PIRSF" id="PIRSF000401">
    <property type="entry name" value="RPL11_MTase"/>
    <property type="match status" value="1"/>
</dbReference>
<dbReference type="SUPFAM" id="SSF53335">
    <property type="entry name" value="S-adenosyl-L-methionine-dependent methyltransferases"/>
    <property type="match status" value="1"/>
</dbReference>
<evidence type="ECO:0000255" key="1">
    <source>
        <dbReference type="HAMAP-Rule" id="MF_00735"/>
    </source>
</evidence>
<comment type="function">
    <text evidence="1">Methylates ribosomal protein L11.</text>
</comment>
<comment type="catalytic activity">
    <reaction evidence="1">
        <text>L-lysyl-[protein] + 3 S-adenosyl-L-methionine = N(6),N(6),N(6)-trimethyl-L-lysyl-[protein] + 3 S-adenosyl-L-homocysteine + 3 H(+)</text>
        <dbReference type="Rhea" id="RHEA:54192"/>
        <dbReference type="Rhea" id="RHEA-COMP:9752"/>
        <dbReference type="Rhea" id="RHEA-COMP:13826"/>
        <dbReference type="ChEBI" id="CHEBI:15378"/>
        <dbReference type="ChEBI" id="CHEBI:29969"/>
        <dbReference type="ChEBI" id="CHEBI:57856"/>
        <dbReference type="ChEBI" id="CHEBI:59789"/>
        <dbReference type="ChEBI" id="CHEBI:61961"/>
    </reaction>
</comment>
<comment type="subcellular location">
    <subcellularLocation>
        <location evidence="1">Cytoplasm</location>
    </subcellularLocation>
</comment>
<comment type="similarity">
    <text evidence="1">Belongs to the methyltransferase superfamily. PrmA family.</text>
</comment>
<protein>
    <recommendedName>
        <fullName evidence="1">Ribosomal protein L11 methyltransferase</fullName>
        <shortName evidence="1">L11 Mtase</shortName>
        <ecNumber evidence="1">2.1.1.-</ecNumber>
    </recommendedName>
</protein>